<evidence type="ECO:0000250" key="1"/>
<evidence type="ECO:0000255" key="2"/>
<evidence type="ECO:0000255" key="3">
    <source>
        <dbReference type="PROSITE-ProRule" id="PRU10074"/>
    </source>
</evidence>
<evidence type="ECO:0000256" key="4">
    <source>
        <dbReference type="SAM" id="MobiDB-lite"/>
    </source>
</evidence>
<evidence type="ECO:0000305" key="5"/>
<keyword id="KW-0053">Apoptosis</keyword>
<keyword id="KW-0121">Carboxypeptidase</keyword>
<keyword id="KW-0325">Glycoprotein</keyword>
<keyword id="KW-0333">Golgi apparatus</keyword>
<keyword id="KW-0378">Hydrolase</keyword>
<keyword id="KW-0472">Membrane</keyword>
<keyword id="KW-0645">Protease</keyword>
<keyword id="KW-1185">Reference proteome</keyword>
<keyword id="KW-0732">Signal</keyword>
<keyword id="KW-0812">Transmembrane</keyword>
<keyword id="KW-1133">Transmembrane helix</keyword>
<proteinExistence type="inferred from homology"/>
<protein>
    <recommendedName>
        <fullName>Pheromone-processing carboxypeptidase kex1</fullName>
        <ecNumber>3.4.16.6</ecNumber>
    </recommendedName>
    <alternativeName>
        <fullName>Carboxypeptidase D</fullName>
    </alternativeName>
</protein>
<comment type="function">
    <text evidence="1">Protease with a carboxypeptidase B-like function involved in the C-terminal processing of the lysine and arginine residues from protein precursors. Promotes cell fusion and is involved in the programmed cell death (By similarity).</text>
</comment>
<comment type="catalytic activity">
    <reaction>
        <text>Preferential release of a C-terminal arginine or lysine residue.</text>
        <dbReference type="EC" id="3.4.16.6"/>
    </reaction>
</comment>
<comment type="subcellular location">
    <subcellularLocation>
        <location evidence="1">Golgi apparatus</location>
        <location evidence="1">trans-Golgi network membrane</location>
        <topology evidence="1">Single-pass type I membrane protein</topology>
    </subcellularLocation>
</comment>
<comment type="similarity">
    <text evidence="5">Belongs to the peptidase S10 family.</text>
</comment>
<name>KEX1_NEUCR</name>
<accession>Q1K722</accession>
<accession>Q871G2</accession>
<sequence>MAATTTTTNAGRSMASWKRLSTLIAAFTLSWTSSFVAAAGSADYFVHDLPGAPDGPLVKMHAGHIEVTPDNNGNLFFWHFQNKHIANKQRTVIWLNGGPGCSSEDGALMEIGPYRLKDENTLVYNDGAWNEFANVLFVDNPVGTGFSYVDTNAYIHELTEMAANFVTFLERWFALFPEYEHDDLYIAGESYAGQHIPYIAQAILERNKNAGPVNRKWNLSGLLIGNGWVSPKEQYDAYLQFAYEKDIVKKGTDLANKLEIQQRICQKEIAVKPDKIDYPECEAILQDMLQLTAGGVGASGKNQCYNMYDVRLKDDYPSCGMAWPPDLKSVTPYLRKKEVIKALNINDNKSTGWTECNGQVGMNFNPKTKPSITLLPDILSAGVPILLFSGAEDLICNHLGTEALISNMEWNGGKGFELTPGTWAPRRDWTFEGEPAGFWQQARNLTYVLFYNSSHMVPFDYPRRTRDMLDRFMGVDISSIGGQPTDSRLDGEKLPETTVGGAAGNSTSNQAAEKAKLEMAKWEAYRKSGELVLVIVIVAAGVWGWFVWKERRKTAGQGYMGVATGERHSISNNPGPRGNLSGGGDRTRGQGLAGFRNKRSGRRDVEAQDFDESELDDLHLSKPEDPHADSRYSIGGASDDEEEQKPGKGSSSRQPGGRS</sequence>
<reference key="1">
    <citation type="journal article" date="2003" name="Nucleic Acids Res.">
        <title>What's in the genome of a filamentous fungus? Analysis of the Neurospora genome sequence.</title>
        <authorList>
            <person name="Mannhaupt G."/>
            <person name="Montrone C."/>
            <person name="Haase D."/>
            <person name="Mewes H.-W."/>
            <person name="Aign V."/>
            <person name="Hoheisel J.D."/>
            <person name="Fartmann B."/>
            <person name="Nyakatura G."/>
            <person name="Kempken F."/>
            <person name="Maier J."/>
            <person name="Schulte U."/>
        </authorList>
    </citation>
    <scope>NUCLEOTIDE SEQUENCE [LARGE SCALE GENOMIC DNA]</scope>
    <source>
        <strain>ATCC 24698 / 74-OR23-1A / CBS 708.71 / DSM 1257 / FGSC 987</strain>
    </source>
</reference>
<reference key="2">
    <citation type="journal article" date="2003" name="Nature">
        <title>The genome sequence of the filamentous fungus Neurospora crassa.</title>
        <authorList>
            <person name="Galagan J.E."/>
            <person name="Calvo S.E."/>
            <person name="Borkovich K.A."/>
            <person name="Selker E.U."/>
            <person name="Read N.D."/>
            <person name="Jaffe D.B."/>
            <person name="FitzHugh W."/>
            <person name="Ma L.-J."/>
            <person name="Smirnov S."/>
            <person name="Purcell S."/>
            <person name="Rehman B."/>
            <person name="Elkins T."/>
            <person name="Engels R."/>
            <person name="Wang S."/>
            <person name="Nielsen C.B."/>
            <person name="Butler J."/>
            <person name="Endrizzi M."/>
            <person name="Qui D."/>
            <person name="Ianakiev P."/>
            <person name="Bell-Pedersen D."/>
            <person name="Nelson M.A."/>
            <person name="Werner-Washburne M."/>
            <person name="Selitrennikoff C.P."/>
            <person name="Kinsey J.A."/>
            <person name="Braun E.L."/>
            <person name="Zelter A."/>
            <person name="Schulte U."/>
            <person name="Kothe G.O."/>
            <person name="Jedd G."/>
            <person name="Mewes H.-W."/>
            <person name="Staben C."/>
            <person name="Marcotte E."/>
            <person name="Greenberg D."/>
            <person name="Roy A."/>
            <person name="Foley K."/>
            <person name="Naylor J."/>
            <person name="Stange-Thomann N."/>
            <person name="Barrett R."/>
            <person name="Gnerre S."/>
            <person name="Kamal M."/>
            <person name="Kamvysselis M."/>
            <person name="Mauceli E.W."/>
            <person name="Bielke C."/>
            <person name="Rudd S."/>
            <person name="Frishman D."/>
            <person name="Krystofova S."/>
            <person name="Rasmussen C."/>
            <person name="Metzenberg R.L."/>
            <person name="Perkins D.D."/>
            <person name="Kroken S."/>
            <person name="Cogoni C."/>
            <person name="Macino G."/>
            <person name="Catcheside D.E.A."/>
            <person name="Li W."/>
            <person name="Pratt R.J."/>
            <person name="Osmani S.A."/>
            <person name="DeSouza C.P.C."/>
            <person name="Glass N.L."/>
            <person name="Orbach M.J."/>
            <person name="Berglund J.A."/>
            <person name="Voelker R."/>
            <person name="Yarden O."/>
            <person name="Plamann M."/>
            <person name="Seiler S."/>
            <person name="Dunlap J.C."/>
            <person name="Radford A."/>
            <person name="Aramayo R."/>
            <person name="Natvig D.O."/>
            <person name="Alex L.A."/>
            <person name="Mannhaupt G."/>
            <person name="Ebbole D.J."/>
            <person name="Freitag M."/>
            <person name="Paulsen I."/>
            <person name="Sachs M.S."/>
            <person name="Lander E.S."/>
            <person name="Nusbaum C."/>
            <person name="Birren B.W."/>
        </authorList>
    </citation>
    <scope>NUCLEOTIDE SEQUENCE [LARGE SCALE GENOMIC DNA]</scope>
    <source>
        <strain>ATCC 24698 / 74-OR23-1A / CBS 708.71 / DSM 1257 / FGSC 987</strain>
    </source>
</reference>
<dbReference type="EC" id="3.4.16.6"/>
<dbReference type="EMBL" id="BX294026">
    <property type="protein sequence ID" value="CAD71044.1"/>
    <property type="molecule type" value="Genomic_DNA"/>
</dbReference>
<dbReference type="EMBL" id="CM002240">
    <property type="protein sequence ID" value="EAA31726.3"/>
    <property type="molecule type" value="Genomic_DNA"/>
</dbReference>
<dbReference type="RefSeq" id="XP_960962.3">
    <property type="nucleotide sequence ID" value="XM_955869.3"/>
</dbReference>
<dbReference type="SMR" id="Q1K722"/>
<dbReference type="FunCoup" id="Q1K722">
    <property type="interactions" value="111"/>
</dbReference>
<dbReference type="STRING" id="367110.Q1K722"/>
<dbReference type="ESTHER" id="neucr-B7H23.190">
    <property type="family name" value="Carboxypeptidase_S10"/>
</dbReference>
<dbReference type="MEROPS" id="S10.007"/>
<dbReference type="GlyCosmos" id="Q1K722">
    <property type="glycosylation" value="5 sites, No reported glycans"/>
</dbReference>
<dbReference type="PaxDb" id="5141-EFNCRP00000003856"/>
<dbReference type="EnsemblFungi" id="EAA31726">
    <property type="protein sequence ID" value="EAA31726"/>
    <property type="gene ID" value="NCU04316"/>
</dbReference>
<dbReference type="GeneID" id="3877103"/>
<dbReference type="KEGG" id="ncr:NCU04316"/>
<dbReference type="VEuPathDB" id="FungiDB:NCU04316"/>
<dbReference type="HOGENOM" id="CLU_008523_11_0_1"/>
<dbReference type="InParanoid" id="Q1K722"/>
<dbReference type="OrthoDB" id="443318at2759"/>
<dbReference type="Proteomes" id="UP000001805">
    <property type="component" value="Chromosome 2, Linkage Group V"/>
</dbReference>
<dbReference type="GO" id="GO:0016020">
    <property type="term" value="C:membrane"/>
    <property type="evidence" value="ECO:0007669"/>
    <property type="project" value="UniProtKB-KW"/>
</dbReference>
<dbReference type="GO" id="GO:0005802">
    <property type="term" value="C:trans-Golgi network"/>
    <property type="evidence" value="ECO:0000318"/>
    <property type="project" value="GO_Central"/>
</dbReference>
<dbReference type="GO" id="GO:0004185">
    <property type="term" value="F:serine-type carboxypeptidase activity"/>
    <property type="evidence" value="ECO:0000318"/>
    <property type="project" value="GO_Central"/>
</dbReference>
<dbReference type="GO" id="GO:0006915">
    <property type="term" value="P:apoptotic process"/>
    <property type="evidence" value="ECO:0007669"/>
    <property type="project" value="UniProtKB-KW"/>
</dbReference>
<dbReference type="GO" id="GO:0006508">
    <property type="term" value="P:proteolysis"/>
    <property type="evidence" value="ECO:0007669"/>
    <property type="project" value="UniProtKB-KW"/>
</dbReference>
<dbReference type="FunFam" id="3.40.50.1820:FF:000121">
    <property type="entry name" value="Carboxypeptidase D"/>
    <property type="match status" value="1"/>
</dbReference>
<dbReference type="Gene3D" id="3.40.50.1820">
    <property type="entry name" value="alpha/beta hydrolase"/>
    <property type="match status" value="1"/>
</dbReference>
<dbReference type="InterPro" id="IPR029058">
    <property type="entry name" value="AB_hydrolase_fold"/>
</dbReference>
<dbReference type="InterPro" id="IPR001563">
    <property type="entry name" value="Peptidase_S10"/>
</dbReference>
<dbReference type="InterPro" id="IPR018202">
    <property type="entry name" value="Ser_caboxypep_ser_AS"/>
</dbReference>
<dbReference type="PANTHER" id="PTHR11802:SF190">
    <property type="entry name" value="PHEROMONE-PROCESSING CARBOXYPEPTIDASE KEX1"/>
    <property type="match status" value="1"/>
</dbReference>
<dbReference type="PANTHER" id="PTHR11802">
    <property type="entry name" value="SERINE PROTEASE FAMILY S10 SERINE CARBOXYPEPTIDASE"/>
    <property type="match status" value="1"/>
</dbReference>
<dbReference type="Pfam" id="PF00450">
    <property type="entry name" value="Peptidase_S10"/>
    <property type="match status" value="1"/>
</dbReference>
<dbReference type="PRINTS" id="PR00724">
    <property type="entry name" value="CRBOXYPTASEC"/>
</dbReference>
<dbReference type="SUPFAM" id="SSF53474">
    <property type="entry name" value="alpha/beta-Hydrolases"/>
    <property type="match status" value="1"/>
</dbReference>
<dbReference type="PROSITE" id="PS00131">
    <property type="entry name" value="CARBOXYPEPT_SER_SER"/>
    <property type="match status" value="1"/>
</dbReference>
<feature type="signal peptide" evidence="2">
    <location>
        <begin position="1"/>
        <end position="38"/>
    </location>
</feature>
<feature type="chain" id="PRO_0000411930" description="Pheromone-processing carboxypeptidase kex1">
    <location>
        <begin position="39"/>
        <end position="659"/>
    </location>
</feature>
<feature type="topological domain" description="Lumenal" evidence="2">
    <location>
        <begin position="39"/>
        <end position="527"/>
    </location>
</feature>
<feature type="transmembrane region" description="Helical" evidence="2">
    <location>
        <begin position="528"/>
        <end position="548"/>
    </location>
</feature>
<feature type="topological domain" description="Cytoplasmic" evidence="2">
    <location>
        <begin position="549"/>
        <end position="659"/>
    </location>
</feature>
<feature type="region of interest" description="Disordered" evidence="4">
    <location>
        <begin position="480"/>
        <end position="507"/>
    </location>
</feature>
<feature type="region of interest" description="Disordered" evidence="4">
    <location>
        <begin position="565"/>
        <end position="659"/>
    </location>
</feature>
<feature type="compositionally biased region" description="Basic and acidic residues" evidence="4">
    <location>
        <begin position="616"/>
        <end position="630"/>
    </location>
</feature>
<feature type="compositionally biased region" description="Polar residues" evidence="4">
    <location>
        <begin position="649"/>
        <end position="659"/>
    </location>
</feature>
<feature type="active site" evidence="3">
    <location>
        <position position="190"/>
    </location>
</feature>
<feature type="active site" evidence="3">
    <location>
        <position position="393"/>
    </location>
</feature>
<feature type="active site" evidence="3">
    <location>
        <position position="455"/>
    </location>
</feature>
<feature type="glycosylation site" description="N-linked (GlcNAc...) asparagine" evidence="2">
    <location>
        <position position="218"/>
    </location>
</feature>
<feature type="glycosylation site" description="N-linked (GlcNAc...) asparagine" evidence="2">
    <location>
        <position position="348"/>
    </location>
</feature>
<feature type="glycosylation site" description="N-linked (GlcNAc...) asparagine" evidence="2">
    <location>
        <position position="444"/>
    </location>
</feature>
<feature type="glycosylation site" description="N-linked (GlcNAc...) asparagine" evidence="2">
    <location>
        <position position="452"/>
    </location>
</feature>
<feature type="glycosylation site" description="N-linked (GlcNAc...) asparagine" evidence="2">
    <location>
        <position position="505"/>
    </location>
</feature>
<organism>
    <name type="scientific">Neurospora crassa (strain ATCC 24698 / 74-OR23-1A / CBS 708.71 / DSM 1257 / FGSC 987)</name>
    <dbReference type="NCBI Taxonomy" id="367110"/>
    <lineage>
        <taxon>Eukaryota</taxon>
        <taxon>Fungi</taxon>
        <taxon>Dikarya</taxon>
        <taxon>Ascomycota</taxon>
        <taxon>Pezizomycotina</taxon>
        <taxon>Sordariomycetes</taxon>
        <taxon>Sordariomycetidae</taxon>
        <taxon>Sordariales</taxon>
        <taxon>Sordariaceae</taxon>
        <taxon>Neurospora</taxon>
    </lineage>
</organism>
<gene>
    <name type="primary">kex1</name>
    <name type="ORF">B7H23.190</name>
    <name type="ORF">NCU04316</name>
</gene>